<comment type="similarity">
    <text evidence="2">Belongs to the UPF0758 family.</text>
</comment>
<dbReference type="EMBL" id="CP000738">
    <property type="protein sequence ID" value="ABR60304.1"/>
    <property type="molecule type" value="Genomic_DNA"/>
</dbReference>
<dbReference type="RefSeq" id="YP_001327139.1">
    <property type="nucleotide sequence ID" value="NC_009636.1"/>
</dbReference>
<dbReference type="SMR" id="A6U9H4"/>
<dbReference type="STRING" id="366394.Smed_1459"/>
<dbReference type="KEGG" id="smd:Smed_1459"/>
<dbReference type="PATRIC" id="fig|366394.8.peg.4591"/>
<dbReference type="eggNOG" id="COG2003">
    <property type="taxonomic scope" value="Bacteria"/>
</dbReference>
<dbReference type="HOGENOM" id="CLU_073529_0_0_5"/>
<dbReference type="OrthoDB" id="9804482at2"/>
<dbReference type="Proteomes" id="UP000001108">
    <property type="component" value="Chromosome"/>
</dbReference>
<dbReference type="GO" id="GO:0046872">
    <property type="term" value="F:metal ion binding"/>
    <property type="evidence" value="ECO:0007669"/>
    <property type="project" value="UniProtKB-KW"/>
</dbReference>
<dbReference type="GO" id="GO:0008237">
    <property type="term" value="F:metallopeptidase activity"/>
    <property type="evidence" value="ECO:0007669"/>
    <property type="project" value="UniProtKB-KW"/>
</dbReference>
<dbReference type="GO" id="GO:0006508">
    <property type="term" value="P:proteolysis"/>
    <property type="evidence" value="ECO:0007669"/>
    <property type="project" value="UniProtKB-KW"/>
</dbReference>
<dbReference type="CDD" id="cd08071">
    <property type="entry name" value="MPN_DUF2466"/>
    <property type="match status" value="1"/>
</dbReference>
<dbReference type="Gene3D" id="3.40.140.10">
    <property type="entry name" value="Cytidine Deaminase, domain 2"/>
    <property type="match status" value="1"/>
</dbReference>
<dbReference type="InterPro" id="IPR037518">
    <property type="entry name" value="MPN"/>
</dbReference>
<dbReference type="InterPro" id="IPR025657">
    <property type="entry name" value="RadC_JAB"/>
</dbReference>
<dbReference type="InterPro" id="IPR010994">
    <property type="entry name" value="RuvA_2-like"/>
</dbReference>
<dbReference type="InterPro" id="IPR001405">
    <property type="entry name" value="UPF0758"/>
</dbReference>
<dbReference type="InterPro" id="IPR020891">
    <property type="entry name" value="UPF0758_CS"/>
</dbReference>
<dbReference type="NCBIfam" id="NF000642">
    <property type="entry name" value="PRK00024.1"/>
    <property type="match status" value="1"/>
</dbReference>
<dbReference type="NCBIfam" id="TIGR00608">
    <property type="entry name" value="radc"/>
    <property type="match status" value="1"/>
</dbReference>
<dbReference type="PANTHER" id="PTHR30471">
    <property type="entry name" value="DNA REPAIR PROTEIN RADC"/>
    <property type="match status" value="1"/>
</dbReference>
<dbReference type="PANTHER" id="PTHR30471:SF3">
    <property type="entry name" value="UPF0758 PROTEIN YEES-RELATED"/>
    <property type="match status" value="1"/>
</dbReference>
<dbReference type="Pfam" id="PF04002">
    <property type="entry name" value="RadC"/>
    <property type="match status" value="1"/>
</dbReference>
<dbReference type="SUPFAM" id="SSF102712">
    <property type="entry name" value="JAB1/MPN domain"/>
    <property type="match status" value="1"/>
</dbReference>
<dbReference type="SUPFAM" id="SSF47781">
    <property type="entry name" value="RuvA domain 2-like"/>
    <property type="match status" value="1"/>
</dbReference>
<dbReference type="PROSITE" id="PS50249">
    <property type="entry name" value="MPN"/>
    <property type="match status" value="1"/>
</dbReference>
<dbReference type="PROSITE" id="PS01302">
    <property type="entry name" value="UPF0758"/>
    <property type="match status" value="1"/>
</dbReference>
<keyword id="KW-0378">Hydrolase</keyword>
<keyword id="KW-0479">Metal-binding</keyword>
<keyword id="KW-0482">Metalloprotease</keyword>
<keyword id="KW-0645">Protease</keyword>
<keyword id="KW-0862">Zinc</keyword>
<protein>
    <recommendedName>
        <fullName>UPF0758 protein Smed_1459</fullName>
    </recommendedName>
</protein>
<name>Y1459_SINMW</name>
<accession>A6U9H4</accession>
<feature type="chain" id="PRO_1000116367" description="UPF0758 protein Smed_1459">
    <location>
        <begin position="1"/>
        <end position="260"/>
    </location>
</feature>
<feature type="domain" description="MPN" evidence="1">
    <location>
        <begin position="138"/>
        <end position="260"/>
    </location>
</feature>
<feature type="short sequence motif" description="JAMM motif" evidence="1">
    <location>
        <begin position="209"/>
        <end position="222"/>
    </location>
</feature>
<feature type="binding site" evidence="1">
    <location>
        <position position="209"/>
    </location>
    <ligand>
        <name>Zn(2+)</name>
        <dbReference type="ChEBI" id="CHEBI:29105"/>
        <note>catalytic</note>
    </ligand>
</feature>
<feature type="binding site" evidence="1">
    <location>
        <position position="211"/>
    </location>
    <ligand>
        <name>Zn(2+)</name>
        <dbReference type="ChEBI" id="CHEBI:29105"/>
        <note>catalytic</note>
    </ligand>
</feature>
<feature type="binding site" evidence="1">
    <location>
        <position position="222"/>
    </location>
    <ligand>
        <name>Zn(2+)</name>
        <dbReference type="ChEBI" id="CHEBI:29105"/>
        <note>catalytic</note>
    </ligand>
</feature>
<reference key="1">
    <citation type="submission" date="2007-06" db="EMBL/GenBank/DDBJ databases">
        <title>Complete sequence of Sinorhizobium medicae WSM419 chromosome.</title>
        <authorList>
            <consortium name="US DOE Joint Genome Institute"/>
            <person name="Copeland A."/>
            <person name="Lucas S."/>
            <person name="Lapidus A."/>
            <person name="Barry K."/>
            <person name="Glavina del Rio T."/>
            <person name="Dalin E."/>
            <person name="Tice H."/>
            <person name="Pitluck S."/>
            <person name="Chain P."/>
            <person name="Malfatti S."/>
            <person name="Shin M."/>
            <person name="Vergez L."/>
            <person name="Schmutz J."/>
            <person name="Larimer F."/>
            <person name="Land M."/>
            <person name="Hauser L."/>
            <person name="Kyrpides N."/>
            <person name="Mikhailova N."/>
            <person name="Reeve W.G."/>
            <person name="Richardson P."/>
        </authorList>
    </citation>
    <scope>NUCLEOTIDE SEQUENCE [LARGE SCALE GENOMIC DNA]</scope>
    <source>
        <strain>WSM419</strain>
    </source>
</reference>
<gene>
    <name type="ordered locus">Smed_1459</name>
</gene>
<organism>
    <name type="scientific">Sinorhizobium medicae (strain WSM419)</name>
    <name type="common">Ensifer medicae</name>
    <dbReference type="NCBI Taxonomy" id="366394"/>
    <lineage>
        <taxon>Bacteria</taxon>
        <taxon>Pseudomonadati</taxon>
        <taxon>Pseudomonadota</taxon>
        <taxon>Alphaproteobacteria</taxon>
        <taxon>Hyphomicrobiales</taxon>
        <taxon>Rhizobiaceae</taxon>
        <taxon>Sinorhizobium/Ensifer group</taxon>
        <taxon>Sinorhizobium</taxon>
    </lineage>
</organism>
<evidence type="ECO:0000255" key="1">
    <source>
        <dbReference type="PROSITE-ProRule" id="PRU01182"/>
    </source>
</evidence>
<evidence type="ECO:0000305" key="2"/>
<proteinExistence type="inferred from homology"/>
<sequence length="260" mass="28794">MTKTPPAPEPDVLFGATDERQFIPQQQTPAAAPAPAEDAHYHGHRDRLRARYREYGDAALADYEILELILFRLIPRRDTKPIAKALLARFGTLAGVFGAPLHLLHEVKGVKESVALDLKLVATASHRMLKSELRNKQVLSSWSAVIDYCHAAMAHETKEQFRILFLDKRNTLIADEVQQQGTIDHTPVYPREVVKRALELSATALILVHNHPSGDPTPSCADIEMTKLIAEAAKPLGIALHDHVIIGKDGHVSLKGLQLF</sequence>